<dbReference type="EMBL" id="AE009950">
    <property type="protein sequence ID" value="AAL81612.1"/>
    <property type="molecule type" value="Genomic_DNA"/>
</dbReference>
<dbReference type="RefSeq" id="WP_011012635.1">
    <property type="nucleotide sequence ID" value="NZ_CP023154.1"/>
</dbReference>
<dbReference type="STRING" id="186497.PF1488"/>
<dbReference type="PaxDb" id="186497-PF1488"/>
<dbReference type="KEGG" id="pfu:PF1488"/>
<dbReference type="PATRIC" id="fig|186497.12.peg.1551"/>
<dbReference type="eggNOG" id="arCOG05084">
    <property type="taxonomic scope" value="Archaea"/>
</dbReference>
<dbReference type="HOGENOM" id="CLU_1243079_0_0_2"/>
<dbReference type="OrthoDB" id="84574at2157"/>
<dbReference type="PhylomeDB" id="Q8U0U4"/>
<dbReference type="Proteomes" id="UP000001013">
    <property type="component" value="Chromosome"/>
</dbReference>
<dbReference type="HAMAP" id="MF_00264">
    <property type="entry name" value="UPF0128"/>
    <property type="match status" value="1"/>
</dbReference>
<dbReference type="InterPro" id="IPR005266">
    <property type="entry name" value="UPF0128"/>
</dbReference>
<dbReference type="NCBIfam" id="TIGR00703">
    <property type="entry name" value="TIGR00703 family protein"/>
    <property type="match status" value="1"/>
</dbReference>
<dbReference type="Pfam" id="PF03673">
    <property type="entry name" value="UPF0128"/>
    <property type="match status" value="1"/>
</dbReference>
<dbReference type="PIRSF" id="PIRSF016179">
    <property type="entry name" value="UCP016179"/>
    <property type="match status" value="1"/>
</dbReference>
<gene>
    <name type="ordered locus">PF1488</name>
</gene>
<evidence type="ECO:0000255" key="1">
    <source>
        <dbReference type="HAMAP-Rule" id="MF_00264"/>
    </source>
</evidence>
<feature type="chain" id="PRO_0000185227" description="UPF0128 protein PF1488">
    <location>
        <begin position="1"/>
        <end position="222"/>
    </location>
</feature>
<protein>
    <recommendedName>
        <fullName evidence="1">UPF0128 protein PF1488</fullName>
    </recommendedName>
</protein>
<accession>Q8U0U4</accession>
<comment type="similarity">
    <text evidence="1">Belongs to the UPF0128 family.</text>
</comment>
<name>Y1488_PYRFU</name>
<sequence>MLEGYYIIENPGVVPSERRFRMKDLKAWGYDLHLGTIEGERAYFVSRTGEREEGETYSLQGKTYHIEKTEKEIPENARLLARIVIERGQPYLEFWLEEEDTVYPLAKEDPRIILKRLWEKEKLNQLLKHVRAVGLTTDFYKDTVFIKSIPLPYEEYPPKVRRVLREVRDIHRDIMGFGRFVFQYFGEENKTHNYRLHWTLPTLHLFDVEIANEIDKVLGMLD</sequence>
<proteinExistence type="inferred from homology"/>
<reference key="1">
    <citation type="journal article" date="1999" name="Genetics">
        <title>Divergence of the hyperthermophilic archaea Pyrococcus furiosus and P. horikoshii inferred from complete genomic sequences.</title>
        <authorList>
            <person name="Maeder D.L."/>
            <person name="Weiss R.B."/>
            <person name="Dunn D.M."/>
            <person name="Cherry J.L."/>
            <person name="Gonzalez J.M."/>
            <person name="DiRuggiero J."/>
            <person name="Robb F.T."/>
        </authorList>
    </citation>
    <scope>NUCLEOTIDE SEQUENCE [LARGE SCALE GENOMIC DNA]</scope>
    <source>
        <strain>ATCC 43587 / DSM 3638 / JCM 8422 / Vc1</strain>
    </source>
</reference>
<keyword id="KW-1185">Reference proteome</keyword>
<organism>
    <name type="scientific">Pyrococcus furiosus (strain ATCC 43587 / DSM 3638 / JCM 8422 / Vc1)</name>
    <dbReference type="NCBI Taxonomy" id="186497"/>
    <lineage>
        <taxon>Archaea</taxon>
        <taxon>Methanobacteriati</taxon>
        <taxon>Methanobacteriota</taxon>
        <taxon>Thermococci</taxon>
        <taxon>Thermococcales</taxon>
        <taxon>Thermococcaceae</taxon>
        <taxon>Pyrococcus</taxon>
    </lineage>
</organism>